<organism>
    <name type="scientific">Helicobacter pylori (strain J99 / ATCC 700824)</name>
    <name type="common">Campylobacter pylori J99</name>
    <dbReference type="NCBI Taxonomy" id="85963"/>
    <lineage>
        <taxon>Bacteria</taxon>
        <taxon>Pseudomonadati</taxon>
        <taxon>Campylobacterota</taxon>
        <taxon>Epsilonproteobacteria</taxon>
        <taxon>Campylobacterales</taxon>
        <taxon>Helicobacteraceae</taxon>
        <taxon>Helicobacter</taxon>
    </lineage>
</organism>
<feature type="chain" id="PRO_0000158684" description="Fumarate reductase cytochrome b subunit">
    <location>
        <begin position="1"/>
        <end position="255"/>
    </location>
</feature>
<feature type="transmembrane region" description="Helical" evidence="2">
    <location>
        <begin position="33"/>
        <end position="53"/>
    </location>
</feature>
<feature type="transmembrane region" description="Helical" evidence="2">
    <location>
        <begin position="78"/>
        <end position="98"/>
    </location>
</feature>
<feature type="transmembrane region" description="Helical" evidence="2">
    <location>
        <begin position="126"/>
        <end position="146"/>
    </location>
</feature>
<feature type="transmembrane region" description="Helical" evidence="2">
    <location>
        <begin position="168"/>
        <end position="188"/>
    </location>
</feature>
<feature type="transmembrane region" description="Helical" evidence="2">
    <location>
        <begin position="208"/>
        <end position="228"/>
    </location>
</feature>
<feature type="binding site" description="axial binding residue" evidence="1">
    <location>
        <position position="44"/>
    </location>
    <ligand>
        <name>heme b</name>
        <dbReference type="ChEBI" id="CHEBI:60344"/>
        <label>bD</label>
    </ligand>
    <ligandPart>
        <name>Fe</name>
        <dbReference type="ChEBI" id="CHEBI:18248"/>
    </ligandPart>
</feature>
<feature type="binding site" description="axial binding residue" evidence="1">
    <location>
        <position position="93"/>
    </location>
    <ligand>
        <name>heme b</name>
        <dbReference type="ChEBI" id="CHEBI:60344"/>
        <label>bP</label>
    </ligand>
    <ligandPart>
        <name>Fe</name>
        <dbReference type="ChEBI" id="CHEBI:18248"/>
    </ligandPart>
</feature>
<feature type="binding site" description="axial binding residue" evidence="1">
    <location>
        <position position="143"/>
    </location>
    <ligand>
        <name>heme b</name>
        <dbReference type="ChEBI" id="CHEBI:60344"/>
        <label>bD</label>
    </ligand>
    <ligandPart>
        <name>Fe</name>
        <dbReference type="ChEBI" id="CHEBI:18248"/>
    </ligandPart>
</feature>
<feature type="binding site" description="axial binding residue" evidence="1">
    <location>
        <position position="182"/>
    </location>
    <ligand>
        <name>heme b</name>
        <dbReference type="ChEBI" id="CHEBI:60344"/>
        <label>bP</label>
    </ligand>
    <ligandPart>
        <name>Fe</name>
        <dbReference type="ChEBI" id="CHEBI:18248"/>
    </ligandPart>
</feature>
<reference key="1">
    <citation type="journal article" date="1999" name="Nature">
        <title>Genomic sequence comparison of two unrelated isolates of the human gastric pathogen Helicobacter pylori.</title>
        <authorList>
            <person name="Alm R.A."/>
            <person name="Ling L.-S.L."/>
            <person name="Moir D.T."/>
            <person name="King B.L."/>
            <person name="Brown E.D."/>
            <person name="Doig P.C."/>
            <person name="Smith D.R."/>
            <person name="Noonan B."/>
            <person name="Guild B.C."/>
            <person name="deJonge B.L."/>
            <person name="Carmel G."/>
            <person name="Tummino P.J."/>
            <person name="Caruso A."/>
            <person name="Uria-Nickelsen M."/>
            <person name="Mills D.M."/>
            <person name="Ives C."/>
            <person name="Gibson R."/>
            <person name="Merberg D."/>
            <person name="Mills S.D."/>
            <person name="Jiang Q."/>
            <person name="Taylor D.E."/>
            <person name="Vovis G.F."/>
            <person name="Trust T.J."/>
        </authorList>
    </citation>
    <scope>NUCLEOTIDE SEQUENCE [LARGE SCALE GENOMIC DNA]</scope>
    <source>
        <strain>J99 / ATCC 700824</strain>
    </source>
</reference>
<name>FRDC_HELPJ</name>
<comment type="function">
    <text evidence="1">The fumarate reductase enzyme complex is required for fumarate respiration. This subunit anchors the complex in the membrane and binds a diheme cytochrome b.</text>
</comment>
<comment type="cofactor">
    <cofactor evidence="1">
        <name>heme b</name>
        <dbReference type="ChEBI" id="CHEBI:60344"/>
    </cofactor>
    <text evidence="1">Binds 2 heme b molecules per subunit, called the proximal (bP) and distal (bD) hemes.</text>
</comment>
<comment type="subunit">
    <text evidence="1">Part of an enzyme complex containing three subunits: a flavoprotein (frdA), an iron-sulfur protein (frdB), and diheme cytochrome b (frdC).</text>
</comment>
<comment type="subcellular location">
    <subcellularLocation>
        <location evidence="2">Cell inner membrane</location>
        <topology evidence="1">Multi-pass membrane protein</topology>
    </subcellularLocation>
</comment>
<comment type="similarity">
    <text evidence="3">Belongs to the diheme cytochrome b FrdC family.</text>
</comment>
<accession>Q9ZMN9</accession>
<dbReference type="EMBL" id="AE001439">
    <property type="protein sequence ID" value="AAD05763.1"/>
    <property type="molecule type" value="Genomic_DNA"/>
</dbReference>
<dbReference type="PIR" id="H71963">
    <property type="entry name" value="H71963"/>
</dbReference>
<dbReference type="RefSeq" id="WP_001183641.1">
    <property type="nucleotide sequence ID" value="NZ_CP011330.1"/>
</dbReference>
<dbReference type="SMR" id="Q9ZMN9"/>
<dbReference type="KEGG" id="hpj:jhp_0179"/>
<dbReference type="PATRIC" id="fig|85963.30.peg.842"/>
<dbReference type="eggNOG" id="ENOG5031HUY">
    <property type="taxonomic scope" value="Bacteria"/>
</dbReference>
<dbReference type="Proteomes" id="UP000000804">
    <property type="component" value="Chromosome"/>
</dbReference>
<dbReference type="GO" id="GO:0005886">
    <property type="term" value="C:plasma membrane"/>
    <property type="evidence" value="ECO:0007669"/>
    <property type="project" value="UniProtKB-SubCell"/>
</dbReference>
<dbReference type="GO" id="GO:0046872">
    <property type="term" value="F:metal ion binding"/>
    <property type="evidence" value="ECO:0007669"/>
    <property type="project" value="UniProtKB-KW"/>
</dbReference>
<dbReference type="GO" id="GO:0006099">
    <property type="term" value="P:tricarboxylic acid cycle"/>
    <property type="evidence" value="ECO:0007669"/>
    <property type="project" value="UniProtKB-KW"/>
</dbReference>
<dbReference type="CDD" id="cd00581">
    <property type="entry name" value="QFR_TypeB_TM"/>
    <property type="match status" value="1"/>
</dbReference>
<dbReference type="Gene3D" id="1.20.1300.10">
    <property type="entry name" value="Fumarate reductase/succinate dehydrogenase, transmembrane subunit"/>
    <property type="match status" value="1"/>
</dbReference>
<dbReference type="InterPro" id="IPR004224">
    <property type="entry name" value="Fum_red_B_TM"/>
</dbReference>
<dbReference type="InterPro" id="IPR034804">
    <property type="entry name" value="SQR/QFR_C/D"/>
</dbReference>
<dbReference type="InterPro" id="IPR000701">
    <property type="entry name" value="SuccDH_FuR_B_TM-su"/>
</dbReference>
<dbReference type="NCBIfam" id="NF010072">
    <property type="entry name" value="PRK13553.1"/>
    <property type="match status" value="1"/>
</dbReference>
<dbReference type="Pfam" id="PF01127">
    <property type="entry name" value="Sdh_cyt"/>
    <property type="match status" value="1"/>
</dbReference>
<dbReference type="PIRSF" id="PIRSF000177">
    <property type="entry name" value="Fumar_rd_cyt_b"/>
    <property type="match status" value="1"/>
</dbReference>
<dbReference type="SUPFAM" id="SSF81343">
    <property type="entry name" value="Fumarate reductase respiratory complex transmembrane subunits"/>
    <property type="match status" value="1"/>
</dbReference>
<keyword id="KW-0997">Cell inner membrane</keyword>
<keyword id="KW-1003">Cell membrane</keyword>
<keyword id="KW-0249">Electron transport</keyword>
<keyword id="KW-0349">Heme</keyword>
<keyword id="KW-0408">Iron</keyword>
<keyword id="KW-0472">Membrane</keyword>
<keyword id="KW-0479">Metal-binding</keyword>
<keyword id="KW-0812">Transmembrane</keyword>
<keyword id="KW-1133">Transmembrane helix</keyword>
<keyword id="KW-0813">Transport</keyword>
<keyword id="KW-0816">Tricarboxylic acid cycle</keyword>
<sequence>MQQEEIIEGYYGASKGLKKSGIYAKLDFLQSATGLILALFMIAHMFLVSSILISDEAMYKVAKFFEGSLFLKAGEPAIVSVVAAGVILILVAHAFLALRKFPINYRQYKVFKTHKHLMKHGDTSLWFIQALTGFAMFFLASIHLFVMLTEPESIGPHGSSYRFVTQNFWLLYIFLLFAVELHGSIGLYRLAIKWGWFKNVSIQGLRKIKWAMSVFFIVLGLCTYGAYIKKGLENKDNGIKTMQEAIEADGKFHKE</sequence>
<gene>
    <name type="primary">frdC</name>
    <name type="ordered locus">jhp_0179</name>
</gene>
<protein>
    <recommendedName>
        <fullName>Fumarate reductase cytochrome b subunit</fullName>
    </recommendedName>
    <alternativeName>
        <fullName evidence="3">Quinol-fumarate reductase cytochrome b subunit</fullName>
        <shortName evidence="3">QFR cytochrome b subunit</shortName>
    </alternativeName>
</protein>
<evidence type="ECO:0000250" key="1">
    <source>
        <dbReference type="UniProtKB" id="P17413"/>
    </source>
</evidence>
<evidence type="ECO:0000255" key="2"/>
<evidence type="ECO:0000305" key="3"/>
<proteinExistence type="inferred from homology"/>